<dbReference type="EMBL" id="CP000233">
    <property type="protein sequence ID" value="ABD99864.1"/>
    <property type="molecule type" value="Genomic_DNA"/>
</dbReference>
<dbReference type="RefSeq" id="WP_003700457.1">
    <property type="nucleotide sequence ID" value="NC_007929.1"/>
</dbReference>
<dbReference type="RefSeq" id="YP_535947.1">
    <property type="nucleotide sequence ID" value="NC_007929.1"/>
</dbReference>
<dbReference type="SMR" id="Q1WT94"/>
<dbReference type="STRING" id="362948.LSL_1056"/>
<dbReference type="KEGG" id="lsl:LSL_1056"/>
<dbReference type="PATRIC" id="fig|362948.14.peg.1129"/>
<dbReference type="HOGENOM" id="CLU_107907_0_5_9"/>
<dbReference type="OrthoDB" id="9807753at2"/>
<dbReference type="Proteomes" id="UP000006559">
    <property type="component" value="Chromosome"/>
</dbReference>
<dbReference type="GO" id="GO:0005737">
    <property type="term" value="C:cytoplasm"/>
    <property type="evidence" value="ECO:0007669"/>
    <property type="project" value="UniProtKB-UniRule"/>
</dbReference>
<dbReference type="GO" id="GO:0009295">
    <property type="term" value="C:nucleoid"/>
    <property type="evidence" value="ECO:0007669"/>
    <property type="project" value="UniProtKB-SubCell"/>
</dbReference>
<dbReference type="GO" id="GO:0003700">
    <property type="term" value="F:DNA-binding transcription factor activity"/>
    <property type="evidence" value="ECO:0007669"/>
    <property type="project" value="UniProtKB-UniRule"/>
</dbReference>
<dbReference type="GO" id="GO:0000976">
    <property type="term" value="F:transcription cis-regulatory region binding"/>
    <property type="evidence" value="ECO:0007669"/>
    <property type="project" value="TreeGrafter"/>
</dbReference>
<dbReference type="GO" id="GO:2000143">
    <property type="term" value="P:negative regulation of DNA-templated transcription initiation"/>
    <property type="evidence" value="ECO:0007669"/>
    <property type="project" value="TreeGrafter"/>
</dbReference>
<dbReference type="CDD" id="cd16321">
    <property type="entry name" value="MraZ_C"/>
    <property type="match status" value="1"/>
</dbReference>
<dbReference type="CDD" id="cd16320">
    <property type="entry name" value="MraZ_N"/>
    <property type="match status" value="1"/>
</dbReference>
<dbReference type="FunFam" id="3.40.1550.20:FF:000002">
    <property type="entry name" value="Transcriptional regulator MraZ"/>
    <property type="match status" value="1"/>
</dbReference>
<dbReference type="Gene3D" id="3.40.1550.20">
    <property type="entry name" value="Transcriptional regulator MraZ domain"/>
    <property type="match status" value="1"/>
</dbReference>
<dbReference type="HAMAP" id="MF_01008">
    <property type="entry name" value="MraZ"/>
    <property type="match status" value="1"/>
</dbReference>
<dbReference type="InterPro" id="IPR003444">
    <property type="entry name" value="MraZ"/>
</dbReference>
<dbReference type="InterPro" id="IPR035644">
    <property type="entry name" value="MraZ_C"/>
</dbReference>
<dbReference type="InterPro" id="IPR020603">
    <property type="entry name" value="MraZ_dom"/>
</dbReference>
<dbReference type="InterPro" id="IPR035642">
    <property type="entry name" value="MraZ_N"/>
</dbReference>
<dbReference type="InterPro" id="IPR038619">
    <property type="entry name" value="MraZ_sf"/>
</dbReference>
<dbReference type="InterPro" id="IPR007159">
    <property type="entry name" value="SpoVT-AbrB_dom"/>
</dbReference>
<dbReference type="InterPro" id="IPR037914">
    <property type="entry name" value="SpoVT-AbrB_sf"/>
</dbReference>
<dbReference type="NCBIfam" id="TIGR00242">
    <property type="entry name" value="division/cell wall cluster transcriptional repressor MraZ"/>
    <property type="match status" value="1"/>
</dbReference>
<dbReference type="PANTHER" id="PTHR34701">
    <property type="entry name" value="TRANSCRIPTIONAL REGULATOR MRAZ"/>
    <property type="match status" value="1"/>
</dbReference>
<dbReference type="PANTHER" id="PTHR34701:SF1">
    <property type="entry name" value="TRANSCRIPTIONAL REGULATOR MRAZ"/>
    <property type="match status" value="1"/>
</dbReference>
<dbReference type="Pfam" id="PF02381">
    <property type="entry name" value="MraZ"/>
    <property type="match status" value="2"/>
</dbReference>
<dbReference type="SUPFAM" id="SSF89447">
    <property type="entry name" value="AbrB/MazE/MraZ-like"/>
    <property type="match status" value="1"/>
</dbReference>
<dbReference type="PROSITE" id="PS51740">
    <property type="entry name" value="SPOVT_ABRB"/>
    <property type="match status" value="2"/>
</dbReference>
<keyword id="KW-0963">Cytoplasm</keyword>
<keyword id="KW-0238">DNA-binding</keyword>
<keyword id="KW-1185">Reference proteome</keyword>
<keyword id="KW-0677">Repeat</keyword>
<keyword id="KW-0804">Transcription</keyword>
<keyword id="KW-0805">Transcription regulation</keyword>
<comment type="subunit">
    <text evidence="1">Forms oligomers.</text>
</comment>
<comment type="subcellular location">
    <subcellularLocation>
        <location evidence="1">Cytoplasm</location>
        <location evidence="1">Nucleoid</location>
    </subcellularLocation>
</comment>
<comment type="similarity">
    <text evidence="1">Belongs to the MraZ family.</text>
</comment>
<evidence type="ECO:0000255" key="1">
    <source>
        <dbReference type="HAMAP-Rule" id="MF_01008"/>
    </source>
</evidence>
<evidence type="ECO:0000255" key="2">
    <source>
        <dbReference type="PROSITE-ProRule" id="PRU01076"/>
    </source>
</evidence>
<accession>Q1WT94</accession>
<organism>
    <name type="scientific">Ligilactobacillus salivarius (strain UCC118)</name>
    <name type="common">Lactobacillus salivarius</name>
    <dbReference type="NCBI Taxonomy" id="362948"/>
    <lineage>
        <taxon>Bacteria</taxon>
        <taxon>Bacillati</taxon>
        <taxon>Bacillota</taxon>
        <taxon>Bacilli</taxon>
        <taxon>Lactobacillales</taxon>
        <taxon>Lactobacillaceae</taxon>
        <taxon>Ligilactobacillus</taxon>
    </lineage>
</organism>
<gene>
    <name evidence="1" type="primary">mraZ</name>
    <name type="ordered locus">LSL_1056</name>
</gene>
<feature type="chain" id="PRO_1000062891" description="Transcriptional regulator MraZ">
    <location>
        <begin position="1"/>
        <end position="143"/>
    </location>
</feature>
<feature type="domain" description="SpoVT-AbrB 1" evidence="2">
    <location>
        <begin position="5"/>
        <end position="47"/>
    </location>
</feature>
<feature type="domain" description="SpoVT-AbrB 2" evidence="2">
    <location>
        <begin position="76"/>
        <end position="119"/>
    </location>
</feature>
<reference key="1">
    <citation type="journal article" date="2006" name="Proc. Natl. Acad. Sci. U.S.A.">
        <title>Multireplicon genome architecture of Lactobacillus salivarius.</title>
        <authorList>
            <person name="Claesson M.J."/>
            <person name="Li Y."/>
            <person name="Leahy S."/>
            <person name="Canchaya C."/>
            <person name="van Pijkeren J.P."/>
            <person name="Cerdeno-Tarraga A.M."/>
            <person name="Parkhill J."/>
            <person name="Flynn S."/>
            <person name="O'Sullivan G.C."/>
            <person name="Collins J.K."/>
            <person name="Higgins D."/>
            <person name="Shanahan F."/>
            <person name="Fitzgerald G.F."/>
            <person name="van Sinderen D."/>
            <person name="O'Toole P.W."/>
        </authorList>
    </citation>
    <scope>NUCLEOTIDE SEQUENCE [LARGE SCALE GENOMIC DNA]</scope>
    <source>
        <strain>UCC118</strain>
    </source>
</reference>
<proteinExistence type="inferred from homology"/>
<name>MRAZ_LIGS1</name>
<sequence length="143" mass="16609">MFMGEYRHTIDAKGRLIVPAKFREQLGDSFVVTRGMDGCLFGYTQEEWNILETKLQKLPLTKKDARAFVRFFYSAATECEIDKQGRINIPKSLRTHAALQKKCVVVGVSNRFEIWSEDRWEAFADEAEENFDDIAENMIDFDL</sequence>
<protein>
    <recommendedName>
        <fullName>Transcriptional regulator MraZ</fullName>
    </recommendedName>
</protein>